<feature type="signal peptide" evidence="2">
    <location>
        <begin position="1"/>
        <end position="21"/>
    </location>
</feature>
<feature type="chain" id="PRO_0000018804" description="Beta-2-microglobulin" evidence="2">
    <location>
        <begin position="22"/>
        <end position="119"/>
    </location>
</feature>
<feature type="domain" description="Ig-like C1-type">
    <location>
        <begin position="25"/>
        <end position="113"/>
    </location>
</feature>
<feature type="disulfide bond" evidence="1 2">
    <location>
        <begin position="45"/>
        <end position="100"/>
    </location>
</feature>
<feature type="sequence variant">
    <original>S</original>
    <variation>G</variation>
    <location>
        <position position="96"/>
    </location>
</feature>
<feature type="strand" evidence="4">
    <location>
        <begin position="26"/>
        <end position="33"/>
    </location>
</feature>
<feature type="strand" evidence="4">
    <location>
        <begin position="41"/>
        <end position="53"/>
    </location>
</feature>
<feature type="strand" evidence="4">
    <location>
        <begin position="56"/>
        <end position="61"/>
    </location>
</feature>
<feature type="strand" evidence="6">
    <location>
        <begin position="67"/>
        <end position="71"/>
    </location>
</feature>
<feature type="strand" evidence="4">
    <location>
        <begin position="82"/>
        <end position="90"/>
    </location>
</feature>
<feature type="strand" evidence="4">
    <location>
        <begin position="98"/>
        <end position="103"/>
    </location>
</feature>
<feature type="strand" evidence="5">
    <location>
        <begin position="107"/>
        <end position="109"/>
    </location>
</feature>
<feature type="strand" evidence="4">
    <location>
        <begin position="111"/>
        <end position="114"/>
    </location>
</feature>
<protein>
    <recommendedName>
        <fullName>Beta-2-microglobulin</fullName>
    </recommendedName>
</protein>
<sequence>MGKAAAVVLVTLVALLGLAQADLTPKVQVYSRFPASAGTKNVLNCFAAGFHPPKISITLMKDGVPMEGAQYSDMSFNDDWTFQRLVHADFTPSSGSTYACKVEHETLKEPQVYKWDPEF</sequence>
<name>B2MG_CHICK</name>
<keyword id="KW-0002">3D-structure</keyword>
<keyword id="KW-0903">Direct protein sequencing</keyword>
<keyword id="KW-1015">Disulfide bond</keyword>
<keyword id="KW-0391">Immunity</keyword>
<keyword id="KW-0393">Immunoglobulin domain</keyword>
<keyword id="KW-0490">MHC I</keyword>
<keyword id="KW-1185">Reference proteome</keyword>
<keyword id="KW-0964">Secreted</keyword>
<keyword id="KW-0732">Signal</keyword>
<evidence type="ECO:0000255" key="1">
    <source>
        <dbReference type="PROSITE-ProRule" id="PRU00114"/>
    </source>
</evidence>
<evidence type="ECO:0000269" key="2">
    <source>
    </source>
</evidence>
<evidence type="ECO:0000305" key="3"/>
<evidence type="ECO:0007829" key="4">
    <source>
        <dbReference type="PDB" id="3P73"/>
    </source>
</evidence>
<evidence type="ECO:0007829" key="5">
    <source>
        <dbReference type="PDB" id="4G43"/>
    </source>
</evidence>
<evidence type="ECO:0007829" key="6">
    <source>
        <dbReference type="PDB" id="8Y74"/>
    </source>
</evidence>
<proteinExistence type="evidence at protein level"/>
<accession>P21611</accession>
<accession>Q5W922</accession>
<reference key="1">
    <citation type="journal article" date="1992" name="J. Immunol.">
        <title>Different features of the MHC class I heterodimer have evolved at different rates. Chicken B-F and beta 2-microglobulin sequences reveal invariant surface residues.</title>
        <authorList>
            <person name="Kaufman J."/>
            <person name="Andersen R."/>
            <person name="Avila D."/>
            <person name="Engberg J."/>
            <person name="Lambris J."/>
            <person name="Salomonsen J."/>
            <person name="Welinder K."/>
            <person name="Skjoedt K."/>
        </authorList>
    </citation>
    <scope>NUCLEOTIDE SEQUENCE [MRNA]</scope>
</reference>
<reference key="2">
    <citation type="journal article" date="1996" name="Proc. Natl. Acad. Sci. U.S.A.">
        <title>The chicken beta 2-microglobulin gene is located on a non-major histocompatibility complex microchromosome: a small, G+C-rich gene with X and Y boxes in the promoter.</title>
        <authorList>
            <person name="Riegert P."/>
            <person name="Andersen R."/>
            <person name="Bumstead N."/>
            <person name="Doehring C."/>
            <person name="Dominguez-Steglich M."/>
            <person name="Engberg J."/>
            <person name="Salomonsen J."/>
            <person name="Schmid M."/>
            <person name="Schwager J."/>
            <person name="Skjoedt K."/>
            <person name="Kaufman J."/>
        </authorList>
    </citation>
    <scope>NUCLEOTIDE SEQUENCE [GENOMIC DNA / MRNA]</scope>
</reference>
<reference key="3">
    <citation type="submission" date="2004-05" db="EMBL/GenBank/DDBJ databases">
        <title>Molecular characteristics of MHC class I and beta-2-microglobulin sequences in a chicken line.</title>
        <authorList>
            <person name="Yan R.Q."/>
            <person name="Xia C."/>
        </authorList>
    </citation>
    <scope>NUCLEOTIDE SEQUENCE [MRNA]</scope>
</reference>
<reference key="4">
    <citation type="submission" date="2005-03" db="EMBL/GenBank/DDBJ databases">
        <title>Assessment of AIV specific CTL by chicken MHC-peptide tetramer.</title>
        <authorList>
            <person name="Liu G."/>
            <person name="Tong T."/>
            <person name="Xiao Y."/>
            <person name="Wu D."/>
        </authorList>
    </citation>
    <scope>NUCLEOTIDE SEQUENCE [MRNA]</scope>
</reference>
<reference key="5">
    <citation type="journal article" date="1991" name="Mol. Immunol.">
        <title>Amino acid sequences and structures of chicken and turkey beta 2-microglobulin.</title>
        <authorList>
            <person name="Welinder K.G."/>
            <person name="Jespersen H.M."/>
            <person name="Walther-Rasmussen J."/>
            <person name="Skjoedt K."/>
        </authorList>
    </citation>
    <scope>PROTEIN SEQUENCE OF 22-119</scope>
    <scope>DISULFIDE BOND</scope>
</reference>
<reference key="6">
    <citation type="journal article" date="2007" name="Immunity">
        <title>Structures of an MHC class I molecule from B21 chickens illustrate promiscuous peptide binding.</title>
        <authorList>
            <person name="Koch M."/>
            <person name="Camp S."/>
            <person name="Collen T."/>
            <person name="Avila D."/>
            <person name="Salomonsen J."/>
            <person name="Wallny H.-J."/>
            <person name="van Hateren A."/>
            <person name="Hunt L."/>
            <person name="Jacob J.P."/>
            <person name="Johnston F."/>
            <person name="Marston D.A."/>
            <person name="Shaw I."/>
            <person name="Dunbar P.R."/>
            <person name="Cerundolo V."/>
            <person name="Jones E.Y."/>
            <person name="Kaufman J."/>
        </authorList>
    </citation>
    <scope>X-RAY CRYSTALLOGRAPHY (2.1 ANGSTROMS) OF 22-119</scope>
</reference>
<gene>
    <name type="primary">B2M</name>
</gene>
<comment type="function">
    <text>Component of the class I major histocompatibility complex (MHC). Involved in the presentation of peptide antigens to the immune system.</text>
</comment>
<comment type="subunit">
    <text>Heterodimer of an alpha chain and a beta chain. Beta-2-microglobulin is the beta-chain of major histocompatibility complex class I molecules.</text>
</comment>
<comment type="subcellular location">
    <subcellularLocation>
        <location>Secreted</location>
    </subcellularLocation>
</comment>
<comment type="similarity">
    <text evidence="3">Belongs to the beta-2-microglobulin family.</text>
</comment>
<organism>
    <name type="scientific">Gallus gallus</name>
    <name type="common">Chicken</name>
    <dbReference type="NCBI Taxonomy" id="9031"/>
    <lineage>
        <taxon>Eukaryota</taxon>
        <taxon>Metazoa</taxon>
        <taxon>Chordata</taxon>
        <taxon>Craniata</taxon>
        <taxon>Vertebrata</taxon>
        <taxon>Euteleostomi</taxon>
        <taxon>Archelosauria</taxon>
        <taxon>Archosauria</taxon>
        <taxon>Dinosauria</taxon>
        <taxon>Saurischia</taxon>
        <taxon>Theropoda</taxon>
        <taxon>Coelurosauria</taxon>
        <taxon>Aves</taxon>
        <taxon>Neognathae</taxon>
        <taxon>Galloanserae</taxon>
        <taxon>Galliformes</taxon>
        <taxon>Phasianidae</taxon>
        <taxon>Phasianinae</taxon>
        <taxon>Gallus</taxon>
    </lineage>
</organism>
<dbReference type="EMBL" id="M84767">
    <property type="protein sequence ID" value="AAA64915.1"/>
    <property type="molecule type" value="mRNA"/>
</dbReference>
<dbReference type="EMBL" id="Z48921">
    <property type="protein sequence ID" value="CAA88757.1"/>
    <property type="molecule type" value="mRNA"/>
</dbReference>
<dbReference type="EMBL" id="Z48922">
    <property type="protein sequence ID" value="CAA88758.1"/>
    <property type="molecule type" value="Genomic_DNA"/>
</dbReference>
<dbReference type="EMBL" id="Z48931">
    <property type="protein sequence ID" value="CAA88777.1"/>
    <property type="molecule type" value="Genomic_DNA"/>
</dbReference>
<dbReference type="EMBL" id="AB178590">
    <property type="protein sequence ID" value="BAD69547.1"/>
    <property type="molecule type" value="mRNA"/>
</dbReference>
<dbReference type="EMBL" id="AB178591">
    <property type="protein sequence ID" value="BAD69548.1"/>
    <property type="molecule type" value="mRNA"/>
</dbReference>
<dbReference type="EMBL" id="AB178595">
    <property type="protein sequence ID" value="BAD69552.1"/>
    <property type="molecule type" value="mRNA"/>
</dbReference>
<dbReference type="EMBL" id="AY989898">
    <property type="protein sequence ID" value="AAX94677.1"/>
    <property type="molecule type" value="mRNA"/>
</dbReference>
<dbReference type="PIR" id="S52743">
    <property type="entry name" value="A46492"/>
</dbReference>
<dbReference type="RefSeq" id="NP_001001750.2">
    <property type="nucleotide sequence ID" value="NM_001001750.4"/>
</dbReference>
<dbReference type="RefSeq" id="XP_015134563.1">
    <property type="nucleotide sequence ID" value="XM_015279077.1"/>
</dbReference>
<dbReference type="PDB" id="2YEZ">
    <property type="method" value="X-ray"/>
    <property type="resolution" value="2.90 A"/>
    <property type="chains" value="B=22-119"/>
</dbReference>
<dbReference type="PDB" id="3BEV">
    <property type="method" value="X-ray"/>
    <property type="resolution" value="2.10 A"/>
    <property type="chains" value="B=22-119"/>
</dbReference>
<dbReference type="PDB" id="3BEW">
    <property type="method" value="X-ray"/>
    <property type="resolution" value="2.60 A"/>
    <property type="chains" value="B/E=22-119"/>
</dbReference>
<dbReference type="PDB" id="3JVG">
    <property type="method" value="X-ray"/>
    <property type="resolution" value="2.20 A"/>
    <property type="chains" value="C/D=22-119"/>
</dbReference>
<dbReference type="PDB" id="3O81">
    <property type="method" value="X-ray"/>
    <property type="resolution" value="2.00 A"/>
    <property type="chains" value="A/B=1-119"/>
</dbReference>
<dbReference type="PDB" id="3P73">
    <property type="method" value="X-ray"/>
    <property type="resolution" value="1.32 A"/>
    <property type="chains" value="B=21-119"/>
</dbReference>
<dbReference type="PDB" id="3P77">
    <property type="method" value="X-ray"/>
    <property type="resolution" value="1.60 A"/>
    <property type="chains" value="B=21-119"/>
</dbReference>
<dbReference type="PDB" id="4CVX">
    <property type="method" value="X-ray"/>
    <property type="resolution" value="3.30 A"/>
    <property type="chains" value="B/E=22-119"/>
</dbReference>
<dbReference type="PDB" id="4CVZ">
    <property type="method" value="X-ray"/>
    <property type="resolution" value="2.39 A"/>
    <property type="chains" value="B=22-119"/>
</dbReference>
<dbReference type="PDB" id="4CW1">
    <property type="method" value="X-ray"/>
    <property type="resolution" value="2.58 A"/>
    <property type="chains" value="B/E=22-119"/>
</dbReference>
<dbReference type="PDB" id="4D0B">
    <property type="method" value="X-ray"/>
    <property type="resolution" value="2.80 A"/>
    <property type="chains" value="B=22-119"/>
</dbReference>
<dbReference type="PDB" id="4D0C">
    <property type="method" value="X-ray"/>
    <property type="resolution" value="2.81 A"/>
    <property type="chains" value="B=22-119"/>
</dbReference>
<dbReference type="PDB" id="4D0D">
    <property type="method" value="X-ray"/>
    <property type="resolution" value="3.13 A"/>
    <property type="chains" value="B/E/H/K=22-119"/>
</dbReference>
<dbReference type="PDB" id="4E0R">
    <property type="method" value="X-ray"/>
    <property type="resolution" value="2.26 A"/>
    <property type="chains" value="B/E=22-119"/>
</dbReference>
<dbReference type="PDB" id="4G42">
    <property type="method" value="X-ray"/>
    <property type="resolution" value="2.29 A"/>
    <property type="chains" value="B/E=22-119"/>
</dbReference>
<dbReference type="PDB" id="4G43">
    <property type="method" value="X-ray"/>
    <property type="resolution" value="1.80 A"/>
    <property type="chains" value="B/E=22-119"/>
</dbReference>
<dbReference type="PDB" id="5ACZ">
    <property type="method" value="X-ray"/>
    <property type="resolution" value="2.69 A"/>
    <property type="chains" value="B=22-119"/>
</dbReference>
<dbReference type="PDB" id="5AD0">
    <property type="method" value="X-ray"/>
    <property type="resolution" value="2.84 A"/>
    <property type="chains" value="B=22-119"/>
</dbReference>
<dbReference type="PDB" id="5YMV">
    <property type="method" value="X-ray"/>
    <property type="resolution" value="2.20 A"/>
    <property type="chains" value="B/E=22-119"/>
</dbReference>
<dbReference type="PDB" id="5YMW">
    <property type="method" value="X-ray"/>
    <property type="resolution" value="2.00 A"/>
    <property type="chains" value="B/E/H/K=22-119"/>
</dbReference>
<dbReference type="PDB" id="6IRL">
    <property type="method" value="X-ray"/>
    <property type="resolution" value="2.10 A"/>
    <property type="chains" value="B=22-119"/>
</dbReference>
<dbReference type="PDB" id="6KX9">
    <property type="method" value="X-ray"/>
    <property type="resolution" value="2.90 A"/>
    <property type="chains" value="B=22-119"/>
</dbReference>
<dbReference type="PDB" id="6LHF">
    <property type="method" value="X-ray"/>
    <property type="resolution" value="2.70 A"/>
    <property type="chains" value="B/E=23-118"/>
</dbReference>
<dbReference type="PDB" id="6LHG">
    <property type="method" value="X-ray"/>
    <property type="resolution" value="2.80 A"/>
    <property type="chains" value="B/E=22-118"/>
</dbReference>
<dbReference type="PDB" id="6LHH">
    <property type="method" value="X-ray"/>
    <property type="resolution" value="2.71 A"/>
    <property type="chains" value="B=22-119"/>
</dbReference>
<dbReference type="PDB" id="7WBG">
    <property type="method" value="X-ray"/>
    <property type="resolution" value="2.00 A"/>
    <property type="chains" value="B/E=22-119"/>
</dbReference>
<dbReference type="PDB" id="7WBI">
    <property type="method" value="X-ray"/>
    <property type="resolution" value="1.80 A"/>
    <property type="chains" value="B=22-119"/>
</dbReference>
<dbReference type="PDB" id="8Y74">
    <property type="method" value="X-ray"/>
    <property type="resolution" value="1.90 A"/>
    <property type="chains" value="B/E=22-119"/>
</dbReference>
<dbReference type="PDB" id="8Z0H">
    <property type="method" value="X-ray"/>
    <property type="resolution" value="1.72 A"/>
    <property type="chains" value="B/E/H/K=23-119"/>
</dbReference>
<dbReference type="PDBsum" id="2YEZ"/>
<dbReference type="PDBsum" id="3BEV"/>
<dbReference type="PDBsum" id="3BEW"/>
<dbReference type="PDBsum" id="3JVG"/>
<dbReference type="PDBsum" id="3O81"/>
<dbReference type="PDBsum" id="3P73"/>
<dbReference type="PDBsum" id="3P77"/>
<dbReference type="PDBsum" id="4CVX"/>
<dbReference type="PDBsum" id="4CVZ"/>
<dbReference type="PDBsum" id="4CW1"/>
<dbReference type="PDBsum" id="4D0B"/>
<dbReference type="PDBsum" id="4D0C"/>
<dbReference type="PDBsum" id="4D0D"/>
<dbReference type="PDBsum" id="4E0R"/>
<dbReference type="PDBsum" id="4G42"/>
<dbReference type="PDBsum" id="4G43"/>
<dbReference type="PDBsum" id="5ACZ"/>
<dbReference type="PDBsum" id="5AD0"/>
<dbReference type="PDBsum" id="5YMV"/>
<dbReference type="PDBsum" id="5YMW"/>
<dbReference type="PDBsum" id="6IRL"/>
<dbReference type="PDBsum" id="6KX9"/>
<dbReference type="PDBsum" id="6LHF"/>
<dbReference type="PDBsum" id="6LHG"/>
<dbReference type="PDBsum" id="6LHH"/>
<dbReference type="PDBsum" id="7WBG"/>
<dbReference type="PDBsum" id="7WBI"/>
<dbReference type="PDBsum" id="8Y74"/>
<dbReference type="PDBsum" id="8Z0H"/>
<dbReference type="SMR" id="P21611"/>
<dbReference type="FunCoup" id="P21611">
    <property type="interactions" value="1462"/>
</dbReference>
<dbReference type="STRING" id="9031.ENSGALP00000039454"/>
<dbReference type="PaxDb" id="9031-ENSGALP00000039454"/>
<dbReference type="Ensembl" id="ENSGALT00010056777.1">
    <property type="protein sequence ID" value="ENSGALP00010034517.1"/>
    <property type="gene ID" value="ENSGALG00010023281.1"/>
</dbReference>
<dbReference type="GeneID" id="414830"/>
<dbReference type="KEGG" id="gga:414830"/>
<dbReference type="CTD" id="567"/>
<dbReference type="VEuPathDB" id="HostDB:geneid_414830"/>
<dbReference type="eggNOG" id="ENOG502S8GM">
    <property type="taxonomic scope" value="Eukaryota"/>
</dbReference>
<dbReference type="GeneTree" id="ENSGT00690000102227"/>
<dbReference type="HOGENOM" id="CLU_163066_0_0_1"/>
<dbReference type="InParanoid" id="P21611"/>
<dbReference type="OMA" id="WCVVLVW"/>
<dbReference type="OrthoDB" id="9949628at2759"/>
<dbReference type="PhylomeDB" id="P21611"/>
<dbReference type="TreeFam" id="TF334167"/>
<dbReference type="Reactome" id="R-GGA-1236974">
    <property type="pathway name" value="ER-Phagosome pathway"/>
</dbReference>
<dbReference type="Reactome" id="R-GGA-1236977">
    <property type="pathway name" value="Endosomal/Vacuolar pathway"/>
</dbReference>
<dbReference type="Reactome" id="R-GGA-198933">
    <property type="pathway name" value="Immunoregulatory interactions between a Lymphoid and a non-Lymphoid cell"/>
</dbReference>
<dbReference type="Reactome" id="R-GGA-2424491">
    <property type="pathway name" value="DAP12 signaling"/>
</dbReference>
<dbReference type="Reactome" id="R-GGA-6798695">
    <property type="pathway name" value="Neutrophil degranulation"/>
</dbReference>
<dbReference type="Reactome" id="R-GGA-983170">
    <property type="pathway name" value="Antigen Presentation: Folding, assembly and peptide loading of class I MHC"/>
</dbReference>
<dbReference type="EvolutionaryTrace" id="P21611"/>
<dbReference type="PRO" id="PR:P21611"/>
<dbReference type="Proteomes" id="UP000000539">
    <property type="component" value="Chromosome 10"/>
</dbReference>
<dbReference type="Bgee" id="ENSGALG00000002160">
    <property type="expression patterns" value="Expressed in lung and 13 other cell types or tissues"/>
</dbReference>
<dbReference type="GO" id="GO:0005829">
    <property type="term" value="C:cytosol"/>
    <property type="evidence" value="ECO:0007669"/>
    <property type="project" value="Ensembl"/>
</dbReference>
<dbReference type="GO" id="GO:0005576">
    <property type="term" value="C:extracellular region"/>
    <property type="evidence" value="ECO:0007669"/>
    <property type="project" value="UniProtKB-SubCell"/>
</dbReference>
<dbReference type="GO" id="GO:0005794">
    <property type="term" value="C:Golgi apparatus"/>
    <property type="evidence" value="ECO:0007669"/>
    <property type="project" value="Ensembl"/>
</dbReference>
<dbReference type="GO" id="GO:1990712">
    <property type="term" value="C:HFE-transferrin receptor complex"/>
    <property type="evidence" value="ECO:0007669"/>
    <property type="project" value="Ensembl"/>
</dbReference>
<dbReference type="GO" id="GO:0031902">
    <property type="term" value="C:late endosome membrane"/>
    <property type="evidence" value="ECO:0000318"/>
    <property type="project" value="GO_Central"/>
</dbReference>
<dbReference type="GO" id="GO:0005765">
    <property type="term" value="C:lysosomal membrane"/>
    <property type="evidence" value="ECO:0000318"/>
    <property type="project" value="GO_Central"/>
</dbReference>
<dbReference type="GO" id="GO:0042824">
    <property type="term" value="C:MHC class I peptide loading complex"/>
    <property type="evidence" value="ECO:0007669"/>
    <property type="project" value="Ensembl"/>
</dbReference>
<dbReference type="GO" id="GO:0042612">
    <property type="term" value="C:MHC class I protein complex"/>
    <property type="evidence" value="ECO:0007669"/>
    <property type="project" value="UniProtKB-KW"/>
</dbReference>
<dbReference type="GO" id="GO:0042613">
    <property type="term" value="C:MHC class II protein complex"/>
    <property type="evidence" value="ECO:0000318"/>
    <property type="project" value="GO_Central"/>
</dbReference>
<dbReference type="GO" id="GO:0023026">
    <property type="term" value="F:MHC class II protein complex binding"/>
    <property type="evidence" value="ECO:0000318"/>
    <property type="project" value="GO_Central"/>
</dbReference>
<dbReference type="GO" id="GO:0042605">
    <property type="term" value="F:peptide antigen binding"/>
    <property type="evidence" value="ECO:0000318"/>
    <property type="project" value="GO_Central"/>
</dbReference>
<dbReference type="GO" id="GO:0042803">
    <property type="term" value="F:protein homodimerization activity"/>
    <property type="evidence" value="ECO:0007669"/>
    <property type="project" value="Ensembl"/>
</dbReference>
<dbReference type="GO" id="GO:0005198">
    <property type="term" value="F:structural molecule activity"/>
    <property type="evidence" value="ECO:0007669"/>
    <property type="project" value="Ensembl"/>
</dbReference>
<dbReference type="GO" id="GO:1990000">
    <property type="term" value="P:amyloid fibril formation"/>
    <property type="evidence" value="ECO:0007669"/>
    <property type="project" value="Ensembl"/>
</dbReference>
<dbReference type="GO" id="GO:0019885">
    <property type="term" value="P:antigen processing and presentation of endogenous peptide antigen via MHC class I"/>
    <property type="evidence" value="ECO:0007669"/>
    <property type="project" value="Ensembl"/>
</dbReference>
<dbReference type="GO" id="GO:0019886">
    <property type="term" value="P:antigen processing and presentation of exogenous peptide antigen via MHC class II"/>
    <property type="evidence" value="ECO:0000318"/>
    <property type="project" value="GO_Central"/>
</dbReference>
<dbReference type="GO" id="GO:0071281">
    <property type="term" value="P:cellular response to iron ion"/>
    <property type="evidence" value="ECO:0007669"/>
    <property type="project" value="Ensembl"/>
</dbReference>
<dbReference type="GO" id="GO:0071316">
    <property type="term" value="P:cellular response to nicotine"/>
    <property type="evidence" value="ECO:0007669"/>
    <property type="project" value="Ensembl"/>
</dbReference>
<dbReference type="GO" id="GO:0006955">
    <property type="term" value="P:immune response"/>
    <property type="evidence" value="ECO:0007669"/>
    <property type="project" value="InterPro"/>
</dbReference>
<dbReference type="GO" id="GO:0006879">
    <property type="term" value="P:intracellular iron ion homeostasis"/>
    <property type="evidence" value="ECO:0007669"/>
    <property type="project" value="Ensembl"/>
</dbReference>
<dbReference type="GO" id="GO:0007611">
    <property type="term" value="P:learning or memory"/>
    <property type="evidence" value="ECO:0007669"/>
    <property type="project" value="Ensembl"/>
</dbReference>
<dbReference type="GO" id="GO:0050680">
    <property type="term" value="P:negative regulation of epithelial cell proliferation"/>
    <property type="evidence" value="ECO:0007669"/>
    <property type="project" value="Ensembl"/>
</dbReference>
<dbReference type="GO" id="GO:2000978">
    <property type="term" value="P:negative regulation of forebrain neuron differentiation"/>
    <property type="evidence" value="ECO:0007669"/>
    <property type="project" value="Ensembl"/>
</dbReference>
<dbReference type="GO" id="GO:0050768">
    <property type="term" value="P:negative regulation of neurogenesis"/>
    <property type="evidence" value="ECO:0007669"/>
    <property type="project" value="Ensembl"/>
</dbReference>
<dbReference type="GO" id="GO:0002502">
    <property type="term" value="P:peptide antigen assembly with MHC class I protein complex"/>
    <property type="evidence" value="ECO:0007669"/>
    <property type="project" value="Ensembl"/>
</dbReference>
<dbReference type="GO" id="GO:0002503">
    <property type="term" value="P:peptide antigen assembly with MHC class II protein complex"/>
    <property type="evidence" value="ECO:0000318"/>
    <property type="project" value="GO_Central"/>
</dbReference>
<dbReference type="GO" id="GO:2000774">
    <property type="term" value="P:positive regulation of cellular senescence"/>
    <property type="evidence" value="ECO:0007669"/>
    <property type="project" value="Ensembl"/>
</dbReference>
<dbReference type="GO" id="GO:0050778">
    <property type="term" value="P:positive regulation of immune response"/>
    <property type="evidence" value="ECO:0000318"/>
    <property type="project" value="GO_Central"/>
</dbReference>
<dbReference type="GO" id="GO:0048260">
    <property type="term" value="P:positive regulation of receptor-mediated endocytosis"/>
    <property type="evidence" value="ECO:0007669"/>
    <property type="project" value="Ensembl"/>
</dbReference>
<dbReference type="GO" id="GO:0050870">
    <property type="term" value="P:positive regulation of T cell activation"/>
    <property type="evidence" value="ECO:0000318"/>
    <property type="project" value="GO_Central"/>
</dbReference>
<dbReference type="GO" id="GO:0002726">
    <property type="term" value="P:positive regulation of T cell cytokine production"/>
    <property type="evidence" value="ECO:0007669"/>
    <property type="project" value="Ensembl"/>
</dbReference>
<dbReference type="GO" id="GO:0051289">
    <property type="term" value="P:protein homotetramerization"/>
    <property type="evidence" value="ECO:0007669"/>
    <property type="project" value="Ensembl"/>
</dbReference>
<dbReference type="GO" id="GO:0034756">
    <property type="term" value="P:regulation of iron ion transport"/>
    <property type="evidence" value="ECO:0007669"/>
    <property type="project" value="Ensembl"/>
</dbReference>
<dbReference type="CDD" id="cd05770">
    <property type="entry name" value="IgC1_beta2m"/>
    <property type="match status" value="1"/>
</dbReference>
<dbReference type="FunFam" id="2.60.40.10:FF:001005">
    <property type="entry name" value="Beta-2-microglobulin"/>
    <property type="match status" value="1"/>
</dbReference>
<dbReference type="Gene3D" id="2.60.40.10">
    <property type="entry name" value="Immunoglobulins"/>
    <property type="match status" value="1"/>
</dbReference>
<dbReference type="InterPro" id="IPR015707">
    <property type="entry name" value="B2Microglobulin"/>
</dbReference>
<dbReference type="InterPro" id="IPR007110">
    <property type="entry name" value="Ig-like_dom"/>
</dbReference>
<dbReference type="InterPro" id="IPR036179">
    <property type="entry name" value="Ig-like_dom_sf"/>
</dbReference>
<dbReference type="InterPro" id="IPR013783">
    <property type="entry name" value="Ig-like_fold"/>
</dbReference>
<dbReference type="InterPro" id="IPR003006">
    <property type="entry name" value="Ig/MHC_CS"/>
</dbReference>
<dbReference type="InterPro" id="IPR003597">
    <property type="entry name" value="Ig_C1-set"/>
</dbReference>
<dbReference type="InterPro" id="IPR050160">
    <property type="entry name" value="MHC/Immunoglobulin"/>
</dbReference>
<dbReference type="PANTHER" id="PTHR19944:SF62">
    <property type="entry name" value="BETA-2-MICROGLOBULIN"/>
    <property type="match status" value="1"/>
</dbReference>
<dbReference type="PANTHER" id="PTHR19944">
    <property type="entry name" value="MHC CLASS II-RELATED"/>
    <property type="match status" value="1"/>
</dbReference>
<dbReference type="Pfam" id="PF07654">
    <property type="entry name" value="C1-set"/>
    <property type="match status" value="1"/>
</dbReference>
<dbReference type="SMART" id="SM00407">
    <property type="entry name" value="IGc1"/>
    <property type="match status" value="1"/>
</dbReference>
<dbReference type="SUPFAM" id="SSF48726">
    <property type="entry name" value="Immunoglobulin"/>
    <property type="match status" value="1"/>
</dbReference>
<dbReference type="PROSITE" id="PS50835">
    <property type="entry name" value="IG_LIKE"/>
    <property type="match status" value="1"/>
</dbReference>
<dbReference type="PROSITE" id="PS00290">
    <property type="entry name" value="IG_MHC"/>
    <property type="match status" value="1"/>
</dbReference>